<sequence length="303" mass="32002">MDDVPFLKGHATRNDFVILPDHDDELELDAALVRAICDRRRGLGADGILRVVAVPADDAPVSSAGATADAAAGRPPQPSAGRPPQPAAARWFMDYRNADGSVAEICGNGIRLFARYLVDAGLEEAGRFLVGTRIGPVPVDVPPAGDVTAWLPAPELRGGGRARFDGRMLEGVRVSVGNPHLVCVVDTLADVDFTRAPVLDSDEFPDGANVEVVEIERPGVLRMRVYERGVGETWSCGSGACAVAAVAEGAERIPRPADGWWRIVVPGGELRIRFDGDRVALAGPAVVVAEGRLHLAALEKSDG</sequence>
<proteinExistence type="inferred from homology"/>
<accession>A0LUZ5</accession>
<protein>
    <recommendedName>
        <fullName evidence="1">Diaminopimelate epimerase</fullName>
        <shortName evidence="1">DAP epimerase</shortName>
        <ecNumber evidence="1">5.1.1.7</ecNumber>
    </recommendedName>
    <alternativeName>
        <fullName evidence="1">PLP-independent amino acid racemase</fullName>
    </alternativeName>
</protein>
<gene>
    <name evidence="1" type="primary">dapF</name>
    <name type="ordered locus">Acel_1483</name>
</gene>
<keyword id="KW-0028">Amino-acid biosynthesis</keyword>
<keyword id="KW-0963">Cytoplasm</keyword>
<keyword id="KW-0413">Isomerase</keyword>
<keyword id="KW-0457">Lysine biosynthesis</keyword>
<keyword id="KW-1185">Reference proteome</keyword>
<feature type="chain" id="PRO_1000077688" description="Diaminopimelate epimerase">
    <location>
        <begin position="1"/>
        <end position="303"/>
    </location>
</feature>
<feature type="region of interest" description="Disordered" evidence="2">
    <location>
        <begin position="60"/>
        <end position="86"/>
    </location>
</feature>
<feature type="compositionally biased region" description="Low complexity" evidence="2">
    <location>
        <begin position="60"/>
        <end position="74"/>
    </location>
</feature>
<feature type="compositionally biased region" description="Pro residues" evidence="2">
    <location>
        <begin position="75"/>
        <end position="86"/>
    </location>
</feature>
<feature type="active site" description="Proton donor" evidence="1">
    <location>
        <position position="106"/>
    </location>
</feature>
<feature type="active site" description="Proton acceptor" evidence="1">
    <location>
        <position position="236"/>
    </location>
</feature>
<feature type="binding site" evidence="1">
    <location>
        <position position="14"/>
    </location>
    <ligand>
        <name>substrate</name>
    </ligand>
</feature>
<feature type="binding site" evidence="1">
    <location>
        <position position="97"/>
    </location>
    <ligand>
        <name>substrate</name>
    </ligand>
</feature>
<feature type="binding site" evidence="1">
    <location>
        <begin position="107"/>
        <end position="108"/>
    </location>
    <ligand>
        <name>substrate</name>
    </ligand>
</feature>
<feature type="binding site" evidence="1">
    <location>
        <position position="178"/>
    </location>
    <ligand>
        <name>substrate</name>
    </ligand>
</feature>
<feature type="binding site" evidence="1">
    <location>
        <position position="209"/>
    </location>
    <ligand>
        <name>substrate</name>
    </ligand>
</feature>
<feature type="binding site" evidence="1">
    <location>
        <begin position="227"/>
        <end position="228"/>
    </location>
    <ligand>
        <name>substrate</name>
    </ligand>
</feature>
<feature type="binding site" evidence="1">
    <location>
        <begin position="237"/>
        <end position="238"/>
    </location>
    <ligand>
        <name>substrate</name>
    </ligand>
</feature>
<feature type="site" description="Could be important to modulate the pK values of the two catalytic cysteine residues" evidence="1">
    <location>
        <position position="180"/>
    </location>
</feature>
<feature type="site" description="Could be important to modulate the pK values of the two catalytic cysteine residues" evidence="1">
    <location>
        <position position="227"/>
    </location>
</feature>
<dbReference type="EC" id="5.1.1.7" evidence="1"/>
<dbReference type="EMBL" id="CP000481">
    <property type="protein sequence ID" value="ABK53255.1"/>
    <property type="molecule type" value="Genomic_DNA"/>
</dbReference>
<dbReference type="RefSeq" id="WP_011720318.1">
    <property type="nucleotide sequence ID" value="NC_008578.1"/>
</dbReference>
<dbReference type="SMR" id="A0LUZ5"/>
<dbReference type="FunCoup" id="A0LUZ5">
    <property type="interactions" value="302"/>
</dbReference>
<dbReference type="STRING" id="351607.Acel_1483"/>
<dbReference type="KEGG" id="ace:Acel_1483"/>
<dbReference type="eggNOG" id="COG0253">
    <property type="taxonomic scope" value="Bacteria"/>
</dbReference>
<dbReference type="HOGENOM" id="CLU_053306_4_0_11"/>
<dbReference type="InParanoid" id="A0LUZ5"/>
<dbReference type="UniPathway" id="UPA00034">
    <property type="reaction ID" value="UER00025"/>
</dbReference>
<dbReference type="Proteomes" id="UP000008221">
    <property type="component" value="Chromosome"/>
</dbReference>
<dbReference type="GO" id="GO:0005829">
    <property type="term" value="C:cytosol"/>
    <property type="evidence" value="ECO:0007669"/>
    <property type="project" value="TreeGrafter"/>
</dbReference>
<dbReference type="GO" id="GO:0008837">
    <property type="term" value="F:diaminopimelate epimerase activity"/>
    <property type="evidence" value="ECO:0007669"/>
    <property type="project" value="UniProtKB-UniRule"/>
</dbReference>
<dbReference type="GO" id="GO:0009089">
    <property type="term" value="P:lysine biosynthetic process via diaminopimelate"/>
    <property type="evidence" value="ECO:0007669"/>
    <property type="project" value="UniProtKB-UniRule"/>
</dbReference>
<dbReference type="Gene3D" id="3.10.310.10">
    <property type="entry name" value="Diaminopimelate Epimerase, Chain A, domain 1"/>
    <property type="match status" value="2"/>
</dbReference>
<dbReference type="HAMAP" id="MF_00197">
    <property type="entry name" value="DAP_epimerase"/>
    <property type="match status" value="1"/>
</dbReference>
<dbReference type="InterPro" id="IPR018510">
    <property type="entry name" value="DAP_epimerase_AS"/>
</dbReference>
<dbReference type="InterPro" id="IPR001653">
    <property type="entry name" value="DAP_epimerase_DapF"/>
</dbReference>
<dbReference type="NCBIfam" id="TIGR00652">
    <property type="entry name" value="DapF"/>
    <property type="match status" value="1"/>
</dbReference>
<dbReference type="PANTHER" id="PTHR31689:SF0">
    <property type="entry name" value="DIAMINOPIMELATE EPIMERASE"/>
    <property type="match status" value="1"/>
</dbReference>
<dbReference type="PANTHER" id="PTHR31689">
    <property type="entry name" value="DIAMINOPIMELATE EPIMERASE, CHLOROPLASTIC"/>
    <property type="match status" value="1"/>
</dbReference>
<dbReference type="Pfam" id="PF01678">
    <property type="entry name" value="DAP_epimerase"/>
    <property type="match status" value="2"/>
</dbReference>
<dbReference type="SUPFAM" id="SSF54506">
    <property type="entry name" value="Diaminopimelate epimerase-like"/>
    <property type="match status" value="2"/>
</dbReference>
<dbReference type="PROSITE" id="PS01326">
    <property type="entry name" value="DAP_EPIMERASE"/>
    <property type="match status" value="1"/>
</dbReference>
<name>DAPF_ACIC1</name>
<reference key="1">
    <citation type="journal article" date="2009" name="Genome Res.">
        <title>Complete genome of the cellulolytic thermophile Acidothermus cellulolyticus 11B provides insights into its ecophysiological and evolutionary adaptations.</title>
        <authorList>
            <person name="Barabote R.D."/>
            <person name="Xie G."/>
            <person name="Leu D.H."/>
            <person name="Normand P."/>
            <person name="Necsulea A."/>
            <person name="Daubin V."/>
            <person name="Medigue C."/>
            <person name="Adney W.S."/>
            <person name="Xu X.C."/>
            <person name="Lapidus A."/>
            <person name="Parales R.E."/>
            <person name="Detter C."/>
            <person name="Pujic P."/>
            <person name="Bruce D."/>
            <person name="Lavire C."/>
            <person name="Challacombe J.F."/>
            <person name="Brettin T.S."/>
            <person name="Berry A.M."/>
        </authorList>
    </citation>
    <scope>NUCLEOTIDE SEQUENCE [LARGE SCALE GENOMIC DNA]</scope>
    <source>
        <strain>ATCC 43068 / DSM 8971 / 11B</strain>
    </source>
</reference>
<organism>
    <name type="scientific">Acidothermus cellulolyticus (strain ATCC 43068 / DSM 8971 / 11B)</name>
    <dbReference type="NCBI Taxonomy" id="351607"/>
    <lineage>
        <taxon>Bacteria</taxon>
        <taxon>Bacillati</taxon>
        <taxon>Actinomycetota</taxon>
        <taxon>Actinomycetes</taxon>
        <taxon>Acidothermales</taxon>
        <taxon>Acidothermaceae</taxon>
        <taxon>Acidothermus</taxon>
    </lineage>
</organism>
<comment type="function">
    <text evidence="1">Catalyzes the stereoinversion of LL-2,6-diaminopimelate (L,L-DAP) to meso-diaminopimelate (meso-DAP), a precursor of L-lysine and an essential component of the bacterial peptidoglycan.</text>
</comment>
<comment type="catalytic activity">
    <reaction evidence="1">
        <text>(2S,6S)-2,6-diaminopimelate = meso-2,6-diaminopimelate</text>
        <dbReference type="Rhea" id="RHEA:15393"/>
        <dbReference type="ChEBI" id="CHEBI:57609"/>
        <dbReference type="ChEBI" id="CHEBI:57791"/>
        <dbReference type="EC" id="5.1.1.7"/>
    </reaction>
</comment>
<comment type="pathway">
    <text evidence="1">Amino-acid biosynthesis; L-lysine biosynthesis via DAP pathway; DL-2,6-diaminopimelate from LL-2,6-diaminopimelate: step 1/1.</text>
</comment>
<comment type="subunit">
    <text evidence="1">Homodimer.</text>
</comment>
<comment type="subcellular location">
    <subcellularLocation>
        <location evidence="1">Cytoplasm</location>
    </subcellularLocation>
</comment>
<comment type="similarity">
    <text evidence="1">Belongs to the diaminopimelate epimerase family.</text>
</comment>
<evidence type="ECO:0000255" key="1">
    <source>
        <dbReference type="HAMAP-Rule" id="MF_00197"/>
    </source>
</evidence>
<evidence type="ECO:0000256" key="2">
    <source>
        <dbReference type="SAM" id="MobiDB-lite"/>
    </source>
</evidence>